<organism>
    <name type="scientific">Brevibacillus brevis (strain 47 / JCM 6285 / NBRC 100599)</name>
    <dbReference type="NCBI Taxonomy" id="358681"/>
    <lineage>
        <taxon>Bacteria</taxon>
        <taxon>Bacillati</taxon>
        <taxon>Bacillota</taxon>
        <taxon>Bacilli</taxon>
        <taxon>Bacillales</taxon>
        <taxon>Paenibacillaceae</taxon>
        <taxon>Brevibacillus</taxon>
    </lineage>
</organism>
<proteinExistence type="inferred from homology"/>
<keyword id="KW-1185">Reference proteome</keyword>
<keyword id="KW-0687">Ribonucleoprotein</keyword>
<keyword id="KW-0689">Ribosomal protein</keyword>
<keyword id="KW-0694">RNA-binding</keyword>
<keyword id="KW-0699">rRNA-binding</keyword>
<comment type="function">
    <text evidence="1">Binds the lower part of the 30S subunit head. Binds mRNA in the 70S ribosome, positioning it for translation.</text>
</comment>
<comment type="subunit">
    <text evidence="1">Part of the 30S ribosomal subunit. Forms a tight complex with proteins S10 and S14.</text>
</comment>
<comment type="similarity">
    <text evidence="1">Belongs to the universal ribosomal protein uS3 family.</text>
</comment>
<protein>
    <recommendedName>
        <fullName evidence="1">Small ribosomal subunit protein uS3</fullName>
    </recommendedName>
    <alternativeName>
        <fullName evidence="2">30S ribosomal protein S3</fullName>
    </alternativeName>
</protein>
<gene>
    <name evidence="1" type="primary">rpsC</name>
    <name type="ordered locus">BBR47_02270</name>
</gene>
<name>RS3_BREBN</name>
<sequence length="220" mass="24327">MGQKVSPVGLRIGVIRDWESKWYADKDFATLLHEDLKIRKYVKGRLKDAAVSTIEIERAANRVNVTIHTAKPGMVIGKGGSEVETLRKTLTDLTGKRVHININEIKRPDLDATLVAENIARQLENRISFRRAQKQSITRTLRSGAKGIKTLVSGRLGGADIARSEGYSEGTVPLHTLRADIDYGTAEAHTTYGRIGVKVWIYRGEVLPARKNVATEEGGK</sequence>
<feature type="chain" id="PRO_1000165480" description="Small ribosomal subunit protein uS3">
    <location>
        <begin position="1"/>
        <end position="220"/>
    </location>
</feature>
<feature type="domain" description="KH type-2" evidence="1">
    <location>
        <begin position="38"/>
        <end position="106"/>
    </location>
</feature>
<reference key="1">
    <citation type="submission" date="2005-03" db="EMBL/GenBank/DDBJ databases">
        <title>Brevibacillus brevis strain 47, complete genome.</title>
        <authorList>
            <person name="Hosoyama A."/>
            <person name="Yamada R."/>
            <person name="Hongo Y."/>
            <person name="Terui Y."/>
            <person name="Ankai A."/>
            <person name="Masuyama W."/>
            <person name="Sekiguchi M."/>
            <person name="Takeda T."/>
            <person name="Asano K."/>
            <person name="Ohji S."/>
            <person name="Ichikawa N."/>
            <person name="Narita S."/>
            <person name="Aoki N."/>
            <person name="Miura H."/>
            <person name="Matsushita S."/>
            <person name="Sekigawa T."/>
            <person name="Yamagata H."/>
            <person name="Yoshikawa H."/>
            <person name="Udaka S."/>
            <person name="Tanikawa S."/>
            <person name="Fujita N."/>
        </authorList>
    </citation>
    <scope>NUCLEOTIDE SEQUENCE [LARGE SCALE GENOMIC DNA]</scope>
    <source>
        <strain>47 / JCM 6285 / NBRC 100599</strain>
    </source>
</reference>
<evidence type="ECO:0000255" key="1">
    <source>
        <dbReference type="HAMAP-Rule" id="MF_01309"/>
    </source>
</evidence>
<evidence type="ECO:0000305" key="2"/>
<accession>C0ZII6</accession>
<dbReference type="EMBL" id="AP008955">
    <property type="protein sequence ID" value="BAH41204.1"/>
    <property type="molecule type" value="Genomic_DNA"/>
</dbReference>
<dbReference type="RefSeq" id="WP_012683987.1">
    <property type="nucleotide sequence ID" value="NC_012491.1"/>
</dbReference>
<dbReference type="SMR" id="C0ZII6"/>
<dbReference type="STRING" id="358681.BBR47_02270"/>
<dbReference type="KEGG" id="bbe:BBR47_02270"/>
<dbReference type="eggNOG" id="COG0092">
    <property type="taxonomic scope" value="Bacteria"/>
</dbReference>
<dbReference type="HOGENOM" id="CLU_058591_0_2_9"/>
<dbReference type="Proteomes" id="UP000001877">
    <property type="component" value="Chromosome"/>
</dbReference>
<dbReference type="GO" id="GO:0022627">
    <property type="term" value="C:cytosolic small ribosomal subunit"/>
    <property type="evidence" value="ECO:0007669"/>
    <property type="project" value="TreeGrafter"/>
</dbReference>
<dbReference type="GO" id="GO:0003729">
    <property type="term" value="F:mRNA binding"/>
    <property type="evidence" value="ECO:0007669"/>
    <property type="project" value="UniProtKB-UniRule"/>
</dbReference>
<dbReference type="GO" id="GO:0019843">
    <property type="term" value="F:rRNA binding"/>
    <property type="evidence" value="ECO:0007669"/>
    <property type="project" value="UniProtKB-UniRule"/>
</dbReference>
<dbReference type="GO" id="GO:0003735">
    <property type="term" value="F:structural constituent of ribosome"/>
    <property type="evidence" value="ECO:0007669"/>
    <property type="project" value="InterPro"/>
</dbReference>
<dbReference type="GO" id="GO:0006412">
    <property type="term" value="P:translation"/>
    <property type="evidence" value="ECO:0007669"/>
    <property type="project" value="UniProtKB-UniRule"/>
</dbReference>
<dbReference type="CDD" id="cd02412">
    <property type="entry name" value="KH-II_30S_S3"/>
    <property type="match status" value="1"/>
</dbReference>
<dbReference type="FunFam" id="3.30.300.20:FF:000001">
    <property type="entry name" value="30S ribosomal protein S3"/>
    <property type="match status" value="1"/>
</dbReference>
<dbReference type="Gene3D" id="3.30.300.20">
    <property type="match status" value="1"/>
</dbReference>
<dbReference type="Gene3D" id="3.30.1140.32">
    <property type="entry name" value="Ribosomal protein S3, C-terminal domain"/>
    <property type="match status" value="1"/>
</dbReference>
<dbReference type="HAMAP" id="MF_01309_B">
    <property type="entry name" value="Ribosomal_uS3_B"/>
    <property type="match status" value="1"/>
</dbReference>
<dbReference type="InterPro" id="IPR004087">
    <property type="entry name" value="KH_dom"/>
</dbReference>
<dbReference type="InterPro" id="IPR015946">
    <property type="entry name" value="KH_dom-like_a/b"/>
</dbReference>
<dbReference type="InterPro" id="IPR004044">
    <property type="entry name" value="KH_dom_type_2"/>
</dbReference>
<dbReference type="InterPro" id="IPR009019">
    <property type="entry name" value="KH_sf_prok-type"/>
</dbReference>
<dbReference type="InterPro" id="IPR036419">
    <property type="entry name" value="Ribosomal_S3_C_sf"/>
</dbReference>
<dbReference type="InterPro" id="IPR005704">
    <property type="entry name" value="Ribosomal_uS3_bac-typ"/>
</dbReference>
<dbReference type="InterPro" id="IPR001351">
    <property type="entry name" value="Ribosomal_uS3_C"/>
</dbReference>
<dbReference type="InterPro" id="IPR018280">
    <property type="entry name" value="Ribosomal_uS3_CS"/>
</dbReference>
<dbReference type="NCBIfam" id="TIGR01009">
    <property type="entry name" value="rpsC_bact"/>
    <property type="match status" value="1"/>
</dbReference>
<dbReference type="PANTHER" id="PTHR11760">
    <property type="entry name" value="30S/40S RIBOSOMAL PROTEIN S3"/>
    <property type="match status" value="1"/>
</dbReference>
<dbReference type="PANTHER" id="PTHR11760:SF19">
    <property type="entry name" value="SMALL RIBOSOMAL SUBUNIT PROTEIN US3C"/>
    <property type="match status" value="1"/>
</dbReference>
<dbReference type="Pfam" id="PF07650">
    <property type="entry name" value="KH_2"/>
    <property type="match status" value="1"/>
</dbReference>
<dbReference type="Pfam" id="PF00189">
    <property type="entry name" value="Ribosomal_S3_C"/>
    <property type="match status" value="1"/>
</dbReference>
<dbReference type="SMART" id="SM00322">
    <property type="entry name" value="KH"/>
    <property type="match status" value="1"/>
</dbReference>
<dbReference type="SUPFAM" id="SSF54814">
    <property type="entry name" value="Prokaryotic type KH domain (KH-domain type II)"/>
    <property type="match status" value="1"/>
</dbReference>
<dbReference type="SUPFAM" id="SSF54821">
    <property type="entry name" value="Ribosomal protein S3 C-terminal domain"/>
    <property type="match status" value="1"/>
</dbReference>
<dbReference type="PROSITE" id="PS50823">
    <property type="entry name" value="KH_TYPE_2"/>
    <property type="match status" value="1"/>
</dbReference>
<dbReference type="PROSITE" id="PS00548">
    <property type="entry name" value="RIBOSOMAL_S3"/>
    <property type="match status" value="1"/>
</dbReference>